<protein>
    <recommendedName>
        <fullName evidence="1">Nucleotide-binding protein ABBFA_002973</fullName>
    </recommendedName>
</protein>
<accession>B7H009</accession>
<sequence>MKRILIVTGQSGSGKSSALQVLEDLGYYCIDNLPLALLPEIVAKLDHENNLEQLALGVDVRSTRADMQEFDHVFEQLQKHGTVDVIYLTTQDQDLIARFSASRRPHPLANRFKSLLQCIHEEKQLLIPIQFRATVHIDTTDKSVHDLKHILLSKLGQSDNLIVILQSFGYKHGIPLDADYVFDVRHLPNPHWDLELRRFSGLDEPVKQFLEASPQANEMFEDILHFLKKWLPAFAEGHRHYMTISIGCTGGQHRSVYMVDRLKQALEAEWSVQVLHREMKHWS</sequence>
<keyword id="KW-0067">ATP-binding</keyword>
<keyword id="KW-0342">GTP-binding</keyword>
<keyword id="KW-0547">Nucleotide-binding</keyword>
<gene>
    <name type="ordered locus">ABBFA_002973</name>
</gene>
<evidence type="ECO:0000255" key="1">
    <source>
        <dbReference type="HAMAP-Rule" id="MF_00636"/>
    </source>
</evidence>
<dbReference type="EMBL" id="CP001172">
    <property type="protein sequence ID" value="ACJ56720.1"/>
    <property type="molecule type" value="Genomic_DNA"/>
</dbReference>
<dbReference type="SMR" id="B7H009"/>
<dbReference type="HOGENOM" id="CLU_059558_1_1_6"/>
<dbReference type="Proteomes" id="UP000006924">
    <property type="component" value="Chromosome"/>
</dbReference>
<dbReference type="GO" id="GO:0005524">
    <property type="term" value="F:ATP binding"/>
    <property type="evidence" value="ECO:0007669"/>
    <property type="project" value="UniProtKB-UniRule"/>
</dbReference>
<dbReference type="GO" id="GO:0005525">
    <property type="term" value="F:GTP binding"/>
    <property type="evidence" value="ECO:0007669"/>
    <property type="project" value="UniProtKB-UniRule"/>
</dbReference>
<dbReference type="Gene3D" id="3.40.50.300">
    <property type="entry name" value="P-loop containing nucleotide triphosphate hydrolases"/>
    <property type="match status" value="1"/>
</dbReference>
<dbReference type="HAMAP" id="MF_00636">
    <property type="entry name" value="RapZ_like"/>
    <property type="match status" value="1"/>
</dbReference>
<dbReference type="InterPro" id="IPR027417">
    <property type="entry name" value="P-loop_NTPase"/>
</dbReference>
<dbReference type="InterPro" id="IPR005337">
    <property type="entry name" value="RapZ-like"/>
</dbReference>
<dbReference type="InterPro" id="IPR053930">
    <property type="entry name" value="RapZ-like_N"/>
</dbReference>
<dbReference type="InterPro" id="IPR053931">
    <property type="entry name" value="RapZ_C"/>
</dbReference>
<dbReference type="NCBIfam" id="NF003828">
    <property type="entry name" value="PRK05416.1"/>
    <property type="match status" value="1"/>
</dbReference>
<dbReference type="PANTHER" id="PTHR30448">
    <property type="entry name" value="RNASE ADAPTER PROTEIN RAPZ"/>
    <property type="match status" value="1"/>
</dbReference>
<dbReference type="PANTHER" id="PTHR30448:SF0">
    <property type="entry name" value="RNASE ADAPTER PROTEIN RAPZ"/>
    <property type="match status" value="1"/>
</dbReference>
<dbReference type="Pfam" id="PF22740">
    <property type="entry name" value="PapZ_C"/>
    <property type="match status" value="1"/>
</dbReference>
<dbReference type="Pfam" id="PF03668">
    <property type="entry name" value="RapZ-like_N"/>
    <property type="match status" value="1"/>
</dbReference>
<dbReference type="PIRSF" id="PIRSF005052">
    <property type="entry name" value="P-loopkin"/>
    <property type="match status" value="1"/>
</dbReference>
<dbReference type="SUPFAM" id="SSF52540">
    <property type="entry name" value="P-loop containing nucleoside triphosphate hydrolases"/>
    <property type="match status" value="1"/>
</dbReference>
<comment type="function">
    <text evidence="1">Displays ATPase and GTPase activities.</text>
</comment>
<comment type="similarity">
    <text evidence="1">Belongs to the RapZ-like family.</text>
</comment>
<organism>
    <name type="scientific">Acinetobacter baumannii (strain AB307-0294)</name>
    <dbReference type="NCBI Taxonomy" id="557600"/>
    <lineage>
        <taxon>Bacteria</taxon>
        <taxon>Pseudomonadati</taxon>
        <taxon>Pseudomonadota</taxon>
        <taxon>Gammaproteobacteria</taxon>
        <taxon>Moraxellales</taxon>
        <taxon>Moraxellaceae</taxon>
        <taxon>Acinetobacter</taxon>
        <taxon>Acinetobacter calcoaceticus/baumannii complex</taxon>
    </lineage>
</organism>
<proteinExistence type="inferred from homology"/>
<reference key="1">
    <citation type="journal article" date="2008" name="J. Bacteriol.">
        <title>Comparative genome sequence analysis of multidrug-resistant Acinetobacter baumannii.</title>
        <authorList>
            <person name="Adams M.D."/>
            <person name="Goglin K."/>
            <person name="Molyneaux N."/>
            <person name="Hujer K.M."/>
            <person name="Lavender H."/>
            <person name="Jamison J.J."/>
            <person name="MacDonald I.J."/>
            <person name="Martin K.M."/>
            <person name="Russo T."/>
            <person name="Campagnari A.A."/>
            <person name="Hujer A.M."/>
            <person name="Bonomo R.A."/>
            <person name="Gill S.R."/>
        </authorList>
    </citation>
    <scope>NUCLEOTIDE SEQUENCE [LARGE SCALE GENOMIC DNA]</scope>
    <source>
        <strain>AB307-0294</strain>
    </source>
</reference>
<name>Y2973_ACIB3</name>
<feature type="chain" id="PRO_1000130719" description="Nucleotide-binding protein ABBFA_002973">
    <location>
        <begin position="1"/>
        <end position="283"/>
    </location>
</feature>
<feature type="binding site" evidence="1">
    <location>
        <begin position="9"/>
        <end position="16"/>
    </location>
    <ligand>
        <name>ATP</name>
        <dbReference type="ChEBI" id="CHEBI:30616"/>
    </ligand>
</feature>
<feature type="binding site" evidence="1">
    <location>
        <begin position="59"/>
        <end position="62"/>
    </location>
    <ligand>
        <name>GTP</name>
        <dbReference type="ChEBI" id="CHEBI:37565"/>
    </ligand>
</feature>